<gene>
    <name evidence="1" type="primary">hemE</name>
    <name type="ordered locus">Rru_A3616</name>
</gene>
<reference key="1">
    <citation type="journal article" date="2011" name="Stand. Genomic Sci.">
        <title>Complete genome sequence of Rhodospirillum rubrum type strain (S1).</title>
        <authorList>
            <person name="Munk A.C."/>
            <person name="Copeland A."/>
            <person name="Lucas S."/>
            <person name="Lapidus A."/>
            <person name="Del Rio T.G."/>
            <person name="Barry K."/>
            <person name="Detter J.C."/>
            <person name="Hammon N."/>
            <person name="Israni S."/>
            <person name="Pitluck S."/>
            <person name="Brettin T."/>
            <person name="Bruce D."/>
            <person name="Han C."/>
            <person name="Tapia R."/>
            <person name="Gilna P."/>
            <person name="Schmutz J."/>
            <person name="Larimer F."/>
            <person name="Land M."/>
            <person name="Kyrpides N.C."/>
            <person name="Mavromatis K."/>
            <person name="Richardson P."/>
            <person name="Rohde M."/>
            <person name="Goeker M."/>
            <person name="Klenk H.P."/>
            <person name="Zhang Y."/>
            <person name="Roberts G.P."/>
            <person name="Reslewic S."/>
            <person name="Schwartz D.C."/>
        </authorList>
    </citation>
    <scope>NUCLEOTIDE SEQUENCE [LARGE SCALE GENOMIC DNA]</scope>
    <source>
        <strain>ATCC 11170 / ATH 1.1.1 / DSM 467 / LMG 4362 / NCIMB 8255 / S1</strain>
    </source>
</reference>
<proteinExistence type="inferred from homology"/>
<accession>Q2RN85</accession>
<name>DCUP_RHORT</name>
<dbReference type="EC" id="4.1.1.37" evidence="1"/>
<dbReference type="EMBL" id="CP000230">
    <property type="protein sequence ID" value="ABC24410.1"/>
    <property type="molecule type" value="Genomic_DNA"/>
</dbReference>
<dbReference type="RefSeq" id="WP_011391363.1">
    <property type="nucleotide sequence ID" value="NC_007643.1"/>
</dbReference>
<dbReference type="RefSeq" id="YP_428697.1">
    <property type="nucleotide sequence ID" value="NC_007643.1"/>
</dbReference>
<dbReference type="SMR" id="Q2RN85"/>
<dbReference type="STRING" id="269796.Rru_A3616"/>
<dbReference type="EnsemblBacteria" id="ABC24410">
    <property type="protein sequence ID" value="ABC24410"/>
    <property type="gene ID" value="Rru_A3616"/>
</dbReference>
<dbReference type="KEGG" id="rru:Rru_A3616"/>
<dbReference type="PATRIC" id="fig|269796.9.peg.3737"/>
<dbReference type="eggNOG" id="COG0407">
    <property type="taxonomic scope" value="Bacteria"/>
</dbReference>
<dbReference type="HOGENOM" id="CLU_040933_0_0_5"/>
<dbReference type="PhylomeDB" id="Q2RN85"/>
<dbReference type="UniPathway" id="UPA00251">
    <property type="reaction ID" value="UER00321"/>
</dbReference>
<dbReference type="Proteomes" id="UP000001929">
    <property type="component" value="Chromosome"/>
</dbReference>
<dbReference type="GO" id="GO:0005829">
    <property type="term" value="C:cytosol"/>
    <property type="evidence" value="ECO:0007669"/>
    <property type="project" value="TreeGrafter"/>
</dbReference>
<dbReference type="GO" id="GO:0004853">
    <property type="term" value="F:uroporphyrinogen decarboxylase activity"/>
    <property type="evidence" value="ECO:0007669"/>
    <property type="project" value="UniProtKB-UniRule"/>
</dbReference>
<dbReference type="GO" id="GO:0019353">
    <property type="term" value="P:protoporphyrinogen IX biosynthetic process from glutamate"/>
    <property type="evidence" value="ECO:0007669"/>
    <property type="project" value="TreeGrafter"/>
</dbReference>
<dbReference type="CDD" id="cd00717">
    <property type="entry name" value="URO-D"/>
    <property type="match status" value="1"/>
</dbReference>
<dbReference type="FunFam" id="3.20.20.210:FF:000007">
    <property type="entry name" value="Uroporphyrinogen decarboxylase"/>
    <property type="match status" value="1"/>
</dbReference>
<dbReference type="Gene3D" id="3.20.20.210">
    <property type="match status" value="1"/>
</dbReference>
<dbReference type="HAMAP" id="MF_00218">
    <property type="entry name" value="URO_D"/>
    <property type="match status" value="1"/>
</dbReference>
<dbReference type="InterPro" id="IPR038071">
    <property type="entry name" value="UROD/MetE-like_sf"/>
</dbReference>
<dbReference type="InterPro" id="IPR006361">
    <property type="entry name" value="Uroporphyrinogen_deCO2ase_HemE"/>
</dbReference>
<dbReference type="InterPro" id="IPR000257">
    <property type="entry name" value="Uroporphyrinogen_deCOase"/>
</dbReference>
<dbReference type="NCBIfam" id="TIGR01464">
    <property type="entry name" value="hemE"/>
    <property type="match status" value="1"/>
</dbReference>
<dbReference type="PANTHER" id="PTHR21091">
    <property type="entry name" value="METHYLTETRAHYDROFOLATE:HOMOCYSTEINE METHYLTRANSFERASE RELATED"/>
    <property type="match status" value="1"/>
</dbReference>
<dbReference type="PANTHER" id="PTHR21091:SF169">
    <property type="entry name" value="UROPORPHYRINOGEN DECARBOXYLASE"/>
    <property type="match status" value="1"/>
</dbReference>
<dbReference type="Pfam" id="PF01208">
    <property type="entry name" value="URO-D"/>
    <property type="match status" value="1"/>
</dbReference>
<dbReference type="SUPFAM" id="SSF51726">
    <property type="entry name" value="UROD/MetE-like"/>
    <property type="match status" value="1"/>
</dbReference>
<dbReference type="PROSITE" id="PS00906">
    <property type="entry name" value="UROD_1"/>
    <property type="match status" value="1"/>
</dbReference>
<dbReference type="PROSITE" id="PS00907">
    <property type="entry name" value="UROD_2"/>
    <property type="match status" value="1"/>
</dbReference>
<keyword id="KW-0963">Cytoplasm</keyword>
<keyword id="KW-0210">Decarboxylase</keyword>
<keyword id="KW-0456">Lyase</keyword>
<keyword id="KW-0627">Porphyrin biosynthesis</keyword>
<keyword id="KW-1185">Reference proteome</keyword>
<comment type="function">
    <text evidence="1">Catalyzes the decarboxylation of four acetate groups of uroporphyrinogen-III to yield coproporphyrinogen-III.</text>
</comment>
<comment type="catalytic activity">
    <reaction evidence="1">
        <text>uroporphyrinogen III + 4 H(+) = coproporphyrinogen III + 4 CO2</text>
        <dbReference type="Rhea" id="RHEA:19865"/>
        <dbReference type="ChEBI" id="CHEBI:15378"/>
        <dbReference type="ChEBI" id="CHEBI:16526"/>
        <dbReference type="ChEBI" id="CHEBI:57308"/>
        <dbReference type="ChEBI" id="CHEBI:57309"/>
        <dbReference type="EC" id="4.1.1.37"/>
    </reaction>
</comment>
<comment type="pathway">
    <text evidence="1">Porphyrin-containing compound metabolism; protoporphyrin-IX biosynthesis; coproporphyrinogen-III from 5-aminolevulinate: step 4/4.</text>
</comment>
<comment type="subunit">
    <text evidence="1">Homodimer.</text>
</comment>
<comment type="subcellular location">
    <subcellularLocation>
        <location evidence="1">Cytoplasm</location>
    </subcellularLocation>
</comment>
<comment type="similarity">
    <text evidence="1">Belongs to the uroporphyrinogen decarboxylase family.</text>
</comment>
<protein>
    <recommendedName>
        <fullName evidence="1">Uroporphyrinogen decarboxylase</fullName>
        <shortName evidence="1">UPD</shortName>
        <shortName evidence="1">URO-D</shortName>
        <ecNumber evidence="1">4.1.1.37</ecNumber>
    </recommendedName>
</protein>
<organism>
    <name type="scientific">Rhodospirillum rubrum (strain ATCC 11170 / ATH 1.1.1 / DSM 467 / LMG 4362 / NCIMB 8255 / S1)</name>
    <dbReference type="NCBI Taxonomy" id="269796"/>
    <lineage>
        <taxon>Bacteria</taxon>
        <taxon>Pseudomonadati</taxon>
        <taxon>Pseudomonadota</taxon>
        <taxon>Alphaproteobacteria</taxon>
        <taxon>Rhodospirillales</taxon>
        <taxon>Rhodospirillaceae</taxon>
        <taxon>Rhodospirillum</taxon>
    </lineage>
</organism>
<feature type="chain" id="PRO_0000325686" description="Uroporphyrinogen decarboxylase">
    <location>
        <begin position="1"/>
        <end position="348"/>
    </location>
</feature>
<feature type="binding site" evidence="1">
    <location>
        <begin position="29"/>
        <end position="33"/>
    </location>
    <ligand>
        <name>substrate</name>
    </ligand>
</feature>
<feature type="binding site" evidence="1">
    <location>
        <position position="79"/>
    </location>
    <ligand>
        <name>substrate</name>
    </ligand>
</feature>
<feature type="binding site" evidence="1">
    <location>
        <position position="155"/>
    </location>
    <ligand>
        <name>substrate</name>
    </ligand>
</feature>
<feature type="binding site" evidence="1">
    <location>
        <position position="210"/>
    </location>
    <ligand>
        <name>substrate</name>
    </ligand>
</feature>
<feature type="binding site" evidence="1">
    <location>
        <position position="326"/>
    </location>
    <ligand>
        <name>substrate</name>
    </ligand>
</feature>
<feature type="site" description="Transition state stabilizer" evidence="1">
    <location>
        <position position="79"/>
    </location>
</feature>
<sequence length="348" mass="37764">MSVPSKTQKPFLQALAGETLSPPPVWLMRQAGRYLPEYRATREEAGGFLDLCYTPKLAVEVTLQPLRRYAFDAAILFSDILVVPNAIGRQVAFKQGEGPVLDPLTSRADVEALEPGKLRERLGPVFETVRGLASAIPSTTALIGFAGAPWTVATYMLEGGSSKDFSVAKSWIYSRPDDFAALMEVLISATTDYLIAQIDAGAEAIQIFDTWAGVLPETEFHRWVIEPIGRITRALHEQRPGVPVIGFPKGAGVLYETFIRETGVDGVGLDASVPLAWAAKTLQPLCTVQGNMDPLLLVEGGPLMEQAVKRLLDTLGHGPFIFNLGHGIVPQTPPENVARLIDLVRAPR</sequence>
<evidence type="ECO:0000255" key="1">
    <source>
        <dbReference type="HAMAP-Rule" id="MF_00218"/>
    </source>
</evidence>